<evidence type="ECO:0000255" key="1">
    <source>
        <dbReference type="HAMAP-Rule" id="MF_01810"/>
    </source>
</evidence>
<evidence type="ECO:0000256" key="2">
    <source>
        <dbReference type="SAM" id="MobiDB-lite"/>
    </source>
</evidence>
<accession>Q8UIB3</accession>
<proteinExistence type="inferred from homology"/>
<protein>
    <recommendedName>
        <fullName evidence="1">Membrane protein insertase YidC</fullName>
    </recommendedName>
    <alternativeName>
        <fullName evidence="1">Foldase YidC</fullName>
    </alternativeName>
    <alternativeName>
        <fullName evidence="1">Membrane integrase YidC</fullName>
    </alternativeName>
    <alternativeName>
        <fullName evidence="1">Membrane protein YidC</fullName>
    </alternativeName>
</protein>
<keyword id="KW-0997">Cell inner membrane</keyword>
<keyword id="KW-1003">Cell membrane</keyword>
<keyword id="KW-0143">Chaperone</keyword>
<keyword id="KW-0472">Membrane</keyword>
<keyword id="KW-0653">Protein transport</keyword>
<keyword id="KW-1185">Reference proteome</keyword>
<keyword id="KW-0812">Transmembrane</keyword>
<keyword id="KW-1133">Transmembrane helix</keyword>
<keyword id="KW-0813">Transport</keyword>
<gene>
    <name evidence="1" type="primary">yidC</name>
    <name type="ordered locus">Atu0384</name>
    <name type="ORF">AGR_C_674</name>
</gene>
<comment type="function">
    <text evidence="1">Required for the insertion and/or proper folding and/or complex formation of integral membrane proteins into the membrane. Involved in integration of membrane proteins that insert both dependently and independently of the Sec translocase complex, as well as at least some lipoproteins. Aids folding of multispanning membrane proteins.</text>
</comment>
<comment type="subunit">
    <text evidence="1">Interacts with the Sec translocase complex via SecD. Specifically interacts with transmembrane segments of nascent integral membrane proteins during membrane integration.</text>
</comment>
<comment type="subcellular location">
    <subcellularLocation>
        <location evidence="1">Cell inner membrane</location>
        <topology evidence="1">Multi-pass membrane protein</topology>
    </subcellularLocation>
</comment>
<comment type="similarity">
    <text evidence="1">Belongs to the OXA1/ALB3/YidC family. Type 1 subfamily.</text>
</comment>
<dbReference type="EMBL" id="AE007869">
    <property type="protein sequence ID" value="AAK86200.2"/>
    <property type="molecule type" value="Genomic_DNA"/>
</dbReference>
<dbReference type="PIR" id="AH2623">
    <property type="entry name" value="AH2623"/>
</dbReference>
<dbReference type="PIR" id="G97405">
    <property type="entry name" value="G97405"/>
</dbReference>
<dbReference type="RefSeq" id="NP_353415.2">
    <property type="nucleotide sequence ID" value="NC_003062.2"/>
</dbReference>
<dbReference type="RefSeq" id="WP_006310230.1">
    <property type="nucleotide sequence ID" value="NC_003062.2"/>
</dbReference>
<dbReference type="SMR" id="Q8UIB3"/>
<dbReference type="STRING" id="176299.Atu0384"/>
<dbReference type="EnsemblBacteria" id="AAK86200">
    <property type="protein sequence ID" value="AAK86200"/>
    <property type="gene ID" value="Atu0384"/>
</dbReference>
<dbReference type="GeneID" id="1132422"/>
<dbReference type="KEGG" id="atu:Atu0384"/>
<dbReference type="PATRIC" id="fig|176299.10.peg.376"/>
<dbReference type="eggNOG" id="COG0706">
    <property type="taxonomic scope" value="Bacteria"/>
</dbReference>
<dbReference type="HOGENOM" id="CLU_016535_1_0_5"/>
<dbReference type="OrthoDB" id="9780552at2"/>
<dbReference type="PhylomeDB" id="Q8UIB3"/>
<dbReference type="Proteomes" id="UP000000813">
    <property type="component" value="Chromosome circular"/>
</dbReference>
<dbReference type="GO" id="GO:0005886">
    <property type="term" value="C:plasma membrane"/>
    <property type="evidence" value="ECO:0007669"/>
    <property type="project" value="UniProtKB-SubCell"/>
</dbReference>
<dbReference type="GO" id="GO:0032977">
    <property type="term" value="F:membrane insertase activity"/>
    <property type="evidence" value="ECO:0007669"/>
    <property type="project" value="InterPro"/>
</dbReference>
<dbReference type="GO" id="GO:0051205">
    <property type="term" value="P:protein insertion into membrane"/>
    <property type="evidence" value="ECO:0007669"/>
    <property type="project" value="TreeGrafter"/>
</dbReference>
<dbReference type="GO" id="GO:0015031">
    <property type="term" value="P:protein transport"/>
    <property type="evidence" value="ECO:0007669"/>
    <property type="project" value="UniProtKB-KW"/>
</dbReference>
<dbReference type="CDD" id="cd20070">
    <property type="entry name" value="5TM_YidC_Alb3"/>
    <property type="match status" value="1"/>
</dbReference>
<dbReference type="CDD" id="cd19961">
    <property type="entry name" value="EcYidC-like_peri"/>
    <property type="match status" value="1"/>
</dbReference>
<dbReference type="Gene3D" id="2.70.98.90">
    <property type="match status" value="1"/>
</dbReference>
<dbReference type="HAMAP" id="MF_01810">
    <property type="entry name" value="YidC_type1"/>
    <property type="match status" value="1"/>
</dbReference>
<dbReference type="InterPro" id="IPR019998">
    <property type="entry name" value="Membr_insert_YidC"/>
</dbReference>
<dbReference type="InterPro" id="IPR028053">
    <property type="entry name" value="Membr_insert_YidC_N"/>
</dbReference>
<dbReference type="InterPro" id="IPR001708">
    <property type="entry name" value="YidC/ALB3/OXA1/COX18"/>
</dbReference>
<dbReference type="InterPro" id="IPR028055">
    <property type="entry name" value="YidC/Oxa/ALB_C"/>
</dbReference>
<dbReference type="InterPro" id="IPR047196">
    <property type="entry name" value="YidC_ALB_C"/>
</dbReference>
<dbReference type="InterPro" id="IPR038221">
    <property type="entry name" value="YidC_periplasmic_sf"/>
</dbReference>
<dbReference type="NCBIfam" id="NF002353">
    <property type="entry name" value="PRK01318.1-4"/>
    <property type="match status" value="1"/>
</dbReference>
<dbReference type="NCBIfam" id="TIGR03593">
    <property type="entry name" value="yidC_nterm"/>
    <property type="match status" value="1"/>
</dbReference>
<dbReference type="NCBIfam" id="TIGR03592">
    <property type="entry name" value="yidC_oxa1_cterm"/>
    <property type="match status" value="1"/>
</dbReference>
<dbReference type="PANTHER" id="PTHR12428:SF65">
    <property type="entry name" value="CYTOCHROME C OXIDASE ASSEMBLY PROTEIN COX18, MITOCHONDRIAL"/>
    <property type="match status" value="1"/>
</dbReference>
<dbReference type="PANTHER" id="PTHR12428">
    <property type="entry name" value="OXA1"/>
    <property type="match status" value="1"/>
</dbReference>
<dbReference type="Pfam" id="PF02096">
    <property type="entry name" value="60KD_IMP"/>
    <property type="match status" value="1"/>
</dbReference>
<dbReference type="Pfam" id="PF14849">
    <property type="entry name" value="YidC_periplas"/>
    <property type="match status" value="1"/>
</dbReference>
<dbReference type="PRINTS" id="PR00701">
    <property type="entry name" value="60KDINNERMP"/>
</dbReference>
<dbReference type="PRINTS" id="PR01900">
    <property type="entry name" value="YIDCPROTEIN"/>
</dbReference>
<name>YIDC_AGRFC</name>
<feature type="chain" id="PRO_0000124684" description="Membrane protein insertase YidC">
    <location>
        <begin position="1"/>
        <end position="599"/>
    </location>
</feature>
<feature type="transmembrane region" description="Helical" evidence="1">
    <location>
        <begin position="6"/>
        <end position="26"/>
    </location>
</feature>
<feature type="transmembrane region" description="Helical" evidence="1">
    <location>
        <begin position="378"/>
        <end position="398"/>
    </location>
</feature>
<feature type="transmembrane region" description="Helical" evidence="1">
    <location>
        <begin position="448"/>
        <end position="468"/>
    </location>
</feature>
<feature type="transmembrane region" description="Helical" evidence="1">
    <location>
        <begin position="501"/>
        <end position="521"/>
    </location>
</feature>
<feature type="transmembrane region" description="Helical" evidence="1">
    <location>
        <begin position="536"/>
        <end position="556"/>
    </location>
</feature>
<feature type="region of interest" description="Disordered" evidence="2">
    <location>
        <begin position="35"/>
        <end position="78"/>
    </location>
</feature>
<feature type="compositionally biased region" description="Low complexity" evidence="2">
    <location>
        <begin position="41"/>
        <end position="76"/>
    </location>
</feature>
<sequence>MEKNRNYFIAIALSVVIVLAWQFLYMNPRIEQQRRAEEARQAQQQTTQQQPAPGAAPGATVEGAPPASSTQAAATATREEAIARTQRVAIDTNAIAGSINLTGARFDDIRLKGYHETVDDSSPIITLFSPADTKDGYFTELGYVAAQEVGGVPGPTTVWTLASGDKLTETTPVTLTYTNSKGVVFSRTVSIDEHYMLSIADKVENPGQAAISFATYGRVTRNNKPVIPPVFVIHEGFLGVSGKDGSLTEKKYKDVEEEPVTVAKATGGWLGITDKYWAAAIVPPQTTPFETRYSHITGNQPSYQADFKSDSMTVEAGQSIELKSLVFAGAKEVPLVDRYETEYSVPKFDLLIDWGWFYFITKPMFKMMDFFFRYFGNFGVAILLTTIVVKALFFPLASKQYASMANMKRMQPKMEELKAKHGDDRMAMQQAMMQLYKEEKINPVAGCWPMLLQIPVFFALYKVIYVTIEMRHAPFFGWIHDLSAPDPTSLFNLFGLLPYDVPHFLMIGVWPLVMGITMFLQMRMNPTPPDPTQAMIFTWMPLIFTFMLASFPAGLVIYWAWNNTLSISQQALIMKRHGAKIELFDNIKGLFKRKPVQSK</sequence>
<organism>
    <name type="scientific">Agrobacterium fabrum (strain C58 / ATCC 33970)</name>
    <name type="common">Agrobacterium tumefaciens (strain C58)</name>
    <dbReference type="NCBI Taxonomy" id="176299"/>
    <lineage>
        <taxon>Bacteria</taxon>
        <taxon>Pseudomonadati</taxon>
        <taxon>Pseudomonadota</taxon>
        <taxon>Alphaproteobacteria</taxon>
        <taxon>Hyphomicrobiales</taxon>
        <taxon>Rhizobiaceae</taxon>
        <taxon>Rhizobium/Agrobacterium group</taxon>
        <taxon>Agrobacterium</taxon>
        <taxon>Agrobacterium tumefaciens complex</taxon>
    </lineage>
</organism>
<reference key="1">
    <citation type="journal article" date="2001" name="Science">
        <title>The genome of the natural genetic engineer Agrobacterium tumefaciens C58.</title>
        <authorList>
            <person name="Wood D.W."/>
            <person name="Setubal J.C."/>
            <person name="Kaul R."/>
            <person name="Monks D.E."/>
            <person name="Kitajima J.P."/>
            <person name="Okura V.K."/>
            <person name="Zhou Y."/>
            <person name="Chen L."/>
            <person name="Wood G.E."/>
            <person name="Almeida N.F. Jr."/>
            <person name="Woo L."/>
            <person name="Chen Y."/>
            <person name="Paulsen I.T."/>
            <person name="Eisen J.A."/>
            <person name="Karp P.D."/>
            <person name="Bovee D. Sr."/>
            <person name="Chapman P."/>
            <person name="Clendenning J."/>
            <person name="Deatherage G."/>
            <person name="Gillet W."/>
            <person name="Grant C."/>
            <person name="Kutyavin T."/>
            <person name="Levy R."/>
            <person name="Li M.-J."/>
            <person name="McClelland E."/>
            <person name="Palmieri A."/>
            <person name="Raymond C."/>
            <person name="Rouse G."/>
            <person name="Saenphimmachak C."/>
            <person name="Wu Z."/>
            <person name="Romero P."/>
            <person name="Gordon D."/>
            <person name="Zhang S."/>
            <person name="Yoo H."/>
            <person name="Tao Y."/>
            <person name="Biddle P."/>
            <person name="Jung M."/>
            <person name="Krespan W."/>
            <person name="Perry M."/>
            <person name="Gordon-Kamm B."/>
            <person name="Liao L."/>
            <person name="Kim S."/>
            <person name="Hendrick C."/>
            <person name="Zhao Z.-Y."/>
            <person name="Dolan M."/>
            <person name="Chumley F."/>
            <person name="Tingey S.V."/>
            <person name="Tomb J.-F."/>
            <person name="Gordon M.P."/>
            <person name="Olson M.V."/>
            <person name="Nester E.W."/>
        </authorList>
    </citation>
    <scope>NUCLEOTIDE SEQUENCE [LARGE SCALE GENOMIC DNA]</scope>
    <source>
        <strain>C58 / ATCC 33970</strain>
    </source>
</reference>
<reference key="2">
    <citation type="journal article" date="2001" name="Science">
        <title>Genome sequence of the plant pathogen and biotechnology agent Agrobacterium tumefaciens C58.</title>
        <authorList>
            <person name="Goodner B."/>
            <person name="Hinkle G."/>
            <person name="Gattung S."/>
            <person name="Miller N."/>
            <person name="Blanchard M."/>
            <person name="Qurollo B."/>
            <person name="Goldman B.S."/>
            <person name="Cao Y."/>
            <person name="Askenazi M."/>
            <person name="Halling C."/>
            <person name="Mullin L."/>
            <person name="Houmiel K."/>
            <person name="Gordon J."/>
            <person name="Vaudin M."/>
            <person name="Iartchouk O."/>
            <person name="Epp A."/>
            <person name="Liu F."/>
            <person name="Wollam C."/>
            <person name="Allinger M."/>
            <person name="Doughty D."/>
            <person name="Scott C."/>
            <person name="Lappas C."/>
            <person name="Markelz B."/>
            <person name="Flanagan C."/>
            <person name="Crowell C."/>
            <person name="Gurson J."/>
            <person name="Lomo C."/>
            <person name="Sear C."/>
            <person name="Strub G."/>
            <person name="Cielo C."/>
            <person name="Slater S."/>
        </authorList>
    </citation>
    <scope>NUCLEOTIDE SEQUENCE [LARGE SCALE GENOMIC DNA]</scope>
    <source>
        <strain>C58 / ATCC 33970</strain>
    </source>
</reference>